<organism>
    <name type="scientific">Arabidopsis thaliana</name>
    <name type="common">Mouse-ear cress</name>
    <dbReference type="NCBI Taxonomy" id="3702"/>
    <lineage>
        <taxon>Eukaryota</taxon>
        <taxon>Viridiplantae</taxon>
        <taxon>Streptophyta</taxon>
        <taxon>Embryophyta</taxon>
        <taxon>Tracheophyta</taxon>
        <taxon>Spermatophyta</taxon>
        <taxon>Magnoliopsida</taxon>
        <taxon>eudicotyledons</taxon>
        <taxon>Gunneridae</taxon>
        <taxon>Pentapetalae</taxon>
        <taxon>rosids</taxon>
        <taxon>malvids</taxon>
        <taxon>Brassicales</taxon>
        <taxon>Brassicaceae</taxon>
        <taxon>Camelineae</taxon>
        <taxon>Arabidopsis</taxon>
    </lineage>
</organism>
<reference key="1">
    <citation type="journal article" date="1999" name="Nature">
        <title>Sequence and analysis of chromosome 4 of the plant Arabidopsis thaliana.</title>
        <authorList>
            <person name="Mayer K.F.X."/>
            <person name="Schueller C."/>
            <person name="Wambutt R."/>
            <person name="Murphy G."/>
            <person name="Volckaert G."/>
            <person name="Pohl T."/>
            <person name="Duesterhoeft A."/>
            <person name="Stiekema W."/>
            <person name="Entian K.-D."/>
            <person name="Terryn N."/>
            <person name="Harris B."/>
            <person name="Ansorge W."/>
            <person name="Brandt P."/>
            <person name="Grivell L.A."/>
            <person name="Rieger M."/>
            <person name="Weichselgartner M."/>
            <person name="de Simone V."/>
            <person name="Obermaier B."/>
            <person name="Mache R."/>
            <person name="Mueller M."/>
            <person name="Kreis M."/>
            <person name="Delseny M."/>
            <person name="Puigdomenech P."/>
            <person name="Watson M."/>
            <person name="Schmidtheini T."/>
            <person name="Reichert B."/>
            <person name="Portetelle D."/>
            <person name="Perez-Alonso M."/>
            <person name="Boutry M."/>
            <person name="Bancroft I."/>
            <person name="Vos P."/>
            <person name="Hoheisel J."/>
            <person name="Zimmermann W."/>
            <person name="Wedler H."/>
            <person name="Ridley P."/>
            <person name="Langham S.-A."/>
            <person name="McCullagh B."/>
            <person name="Bilham L."/>
            <person name="Robben J."/>
            <person name="van der Schueren J."/>
            <person name="Grymonprez B."/>
            <person name="Chuang Y.-J."/>
            <person name="Vandenbussche F."/>
            <person name="Braeken M."/>
            <person name="Weltjens I."/>
            <person name="Voet M."/>
            <person name="Bastiaens I."/>
            <person name="Aert R."/>
            <person name="Defoor E."/>
            <person name="Weitzenegger T."/>
            <person name="Bothe G."/>
            <person name="Ramsperger U."/>
            <person name="Hilbert H."/>
            <person name="Braun M."/>
            <person name="Holzer E."/>
            <person name="Brandt A."/>
            <person name="Peters S."/>
            <person name="van Staveren M."/>
            <person name="Dirkse W."/>
            <person name="Mooijman P."/>
            <person name="Klein Lankhorst R."/>
            <person name="Rose M."/>
            <person name="Hauf J."/>
            <person name="Koetter P."/>
            <person name="Berneiser S."/>
            <person name="Hempel S."/>
            <person name="Feldpausch M."/>
            <person name="Lamberth S."/>
            <person name="Van den Daele H."/>
            <person name="De Keyser A."/>
            <person name="Buysshaert C."/>
            <person name="Gielen J."/>
            <person name="Villarroel R."/>
            <person name="De Clercq R."/>
            <person name="van Montagu M."/>
            <person name="Rogers J."/>
            <person name="Cronin A."/>
            <person name="Quail M.A."/>
            <person name="Bray-Allen S."/>
            <person name="Clark L."/>
            <person name="Doggett J."/>
            <person name="Hall S."/>
            <person name="Kay M."/>
            <person name="Lennard N."/>
            <person name="McLay K."/>
            <person name="Mayes R."/>
            <person name="Pettett A."/>
            <person name="Rajandream M.A."/>
            <person name="Lyne M."/>
            <person name="Benes V."/>
            <person name="Rechmann S."/>
            <person name="Borkova D."/>
            <person name="Bloecker H."/>
            <person name="Scharfe M."/>
            <person name="Grimm M."/>
            <person name="Loehnert T.-H."/>
            <person name="Dose S."/>
            <person name="de Haan M."/>
            <person name="Maarse A.C."/>
            <person name="Schaefer M."/>
            <person name="Mueller-Auer S."/>
            <person name="Gabel C."/>
            <person name="Fuchs M."/>
            <person name="Fartmann B."/>
            <person name="Granderath K."/>
            <person name="Dauner D."/>
            <person name="Herzl A."/>
            <person name="Neumann S."/>
            <person name="Argiriou A."/>
            <person name="Vitale D."/>
            <person name="Liguori R."/>
            <person name="Piravandi E."/>
            <person name="Massenet O."/>
            <person name="Quigley F."/>
            <person name="Clabauld G."/>
            <person name="Muendlein A."/>
            <person name="Felber R."/>
            <person name="Schnabl S."/>
            <person name="Hiller R."/>
            <person name="Schmidt W."/>
            <person name="Lecharny A."/>
            <person name="Aubourg S."/>
            <person name="Chefdor F."/>
            <person name="Cooke R."/>
            <person name="Berger C."/>
            <person name="Monfort A."/>
            <person name="Casacuberta E."/>
            <person name="Gibbons T."/>
            <person name="Weber N."/>
            <person name="Vandenbol M."/>
            <person name="Bargues M."/>
            <person name="Terol J."/>
            <person name="Torres A."/>
            <person name="Perez-Perez A."/>
            <person name="Purnelle B."/>
            <person name="Bent E."/>
            <person name="Johnson S."/>
            <person name="Tacon D."/>
            <person name="Jesse T."/>
            <person name="Heijnen L."/>
            <person name="Schwarz S."/>
            <person name="Scholler P."/>
            <person name="Heber S."/>
            <person name="Francs P."/>
            <person name="Bielke C."/>
            <person name="Frishman D."/>
            <person name="Haase D."/>
            <person name="Lemcke K."/>
            <person name="Mewes H.-W."/>
            <person name="Stocker S."/>
            <person name="Zaccaria P."/>
            <person name="Bevan M."/>
            <person name="Wilson R.K."/>
            <person name="de la Bastide M."/>
            <person name="Habermann K."/>
            <person name="Parnell L."/>
            <person name="Dedhia N."/>
            <person name="Gnoj L."/>
            <person name="Schutz K."/>
            <person name="Huang E."/>
            <person name="Spiegel L."/>
            <person name="Sekhon M."/>
            <person name="Murray J."/>
            <person name="Sheet P."/>
            <person name="Cordes M."/>
            <person name="Abu-Threideh J."/>
            <person name="Stoneking T."/>
            <person name="Kalicki J."/>
            <person name="Graves T."/>
            <person name="Harmon G."/>
            <person name="Edwards J."/>
            <person name="Latreille P."/>
            <person name="Courtney L."/>
            <person name="Cloud J."/>
            <person name="Abbott A."/>
            <person name="Scott K."/>
            <person name="Johnson D."/>
            <person name="Minx P."/>
            <person name="Bentley D."/>
            <person name="Fulton B."/>
            <person name="Miller N."/>
            <person name="Greco T."/>
            <person name="Kemp K."/>
            <person name="Kramer J."/>
            <person name="Fulton L."/>
            <person name="Mardis E."/>
            <person name="Dante M."/>
            <person name="Pepin K."/>
            <person name="Hillier L.W."/>
            <person name="Nelson J."/>
            <person name="Spieth J."/>
            <person name="Ryan E."/>
            <person name="Andrews S."/>
            <person name="Geisel C."/>
            <person name="Layman D."/>
            <person name="Du H."/>
            <person name="Ali J."/>
            <person name="Berghoff A."/>
            <person name="Jones K."/>
            <person name="Drone K."/>
            <person name="Cotton M."/>
            <person name="Joshu C."/>
            <person name="Antonoiu B."/>
            <person name="Zidanic M."/>
            <person name="Strong C."/>
            <person name="Sun H."/>
            <person name="Lamar B."/>
            <person name="Yordan C."/>
            <person name="Ma P."/>
            <person name="Zhong J."/>
            <person name="Preston R."/>
            <person name="Vil D."/>
            <person name="Shekher M."/>
            <person name="Matero A."/>
            <person name="Shah R."/>
            <person name="Swaby I.K."/>
            <person name="O'Shaughnessy A."/>
            <person name="Rodriguez M."/>
            <person name="Hoffman J."/>
            <person name="Till S."/>
            <person name="Granat S."/>
            <person name="Shohdy N."/>
            <person name="Hasegawa A."/>
            <person name="Hameed A."/>
            <person name="Lodhi M."/>
            <person name="Johnson A."/>
            <person name="Chen E."/>
            <person name="Marra M.A."/>
            <person name="Martienssen R."/>
            <person name="McCombie W.R."/>
        </authorList>
    </citation>
    <scope>NUCLEOTIDE SEQUENCE [LARGE SCALE GENOMIC DNA]</scope>
    <source>
        <strain>cv. Columbia</strain>
    </source>
</reference>
<reference key="2">
    <citation type="journal article" date="2017" name="Plant J.">
        <title>Araport11: a complete reannotation of the Arabidopsis thaliana reference genome.</title>
        <authorList>
            <person name="Cheng C.Y."/>
            <person name="Krishnakumar V."/>
            <person name="Chan A.P."/>
            <person name="Thibaud-Nissen F."/>
            <person name="Schobel S."/>
            <person name="Town C.D."/>
        </authorList>
    </citation>
    <scope>GENOME REANNOTATION</scope>
    <source>
        <strain>cv. Columbia</strain>
    </source>
</reference>
<reference key="3">
    <citation type="journal article" date="2003" name="Science">
        <title>Empirical analysis of transcriptional activity in the Arabidopsis genome.</title>
        <authorList>
            <person name="Yamada K."/>
            <person name="Lim J."/>
            <person name="Dale J.M."/>
            <person name="Chen H."/>
            <person name="Shinn P."/>
            <person name="Palm C.J."/>
            <person name="Southwick A.M."/>
            <person name="Wu H.C."/>
            <person name="Kim C.J."/>
            <person name="Nguyen M."/>
            <person name="Pham P.K."/>
            <person name="Cheuk R.F."/>
            <person name="Karlin-Newmann G."/>
            <person name="Liu S.X."/>
            <person name="Lam B."/>
            <person name="Sakano H."/>
            <person name="Wu T."/>
            <person name="Yu G."/>
            <person name="Miranda M."/>
            <person name="Quach H.L."/>
            <person name="Tripp M."/>
            <person name="Chang C.H."/>
            <person name="Lee J.M."/>
            <person name="Toriumi M.J."/>
            <person name="Chan M.M."/>
            <person name="Tang C.C."/>
            <person name="Onodera C.S."/>
            <person name="Deng J.M."/>
            <person name="Akiyama K."/>
            <person name="Ansari Y."/>
            <person name="Arakawa T."/>
            <person name="Banh J."/>
            <person name="Banno F."/>
            <person name="Bowser L."/>
            <person name="Brooks S.Y."/>
            <person name="Carninci P."/>
            <person name="Chao Q."/>
            <person name="Choy N."/>
            <person name="Enju A."/>
            <person name="Goldsmith A.D."/>
            <person name="Gurjal M."/>
            <person name="Hansen N.F."/>
            <person name="Hayashizaki Y."/>
            <person name="Johnson-Hopson C."/>
            <person name="Hsuan V.W."/>
            <person name="Iida K."/>
            <person name="Karnes M."/>
            <person name="Khan S."/>
            <person name="Koesema E."/>
            <person name="Ishida J."/>
            <person name="Jiang P.X."/>
            <person name="Jones T."/>
            <person name="Kawai J."/>
            <person name="Kamiya A."/>
            <person name="Meyers C."/>
            <person name="Nakajima M."/>
            <person name="Narusaka M."/>
            <person name="Seki M."/>
            <person name="Sakurai T."/>
            <person name="Satou M."/>
            <person name="Tamse R."/>
            <person name="Vaysberg M."/>
            <person name="Wallender E.K."/>
            <person name="Wong C."/>
            <person name="Yamamura Y."/>
            <person name="Yuan S."/>
            <person name="Shinozaki K."/>
            <person name="Davis R.W."/>
            <person name="Theologis A."/>
            <person name="Ecker J.R."/>
        </authorList>
    </citation>
    <scope>NUCLEOTIDE SEQUENCE [LARGE SCALE MRNA]</scope>
    <source>
        <strain>cv. Columbia</strain>
    </source>
</reference>
<reference key="4">
    <citation type="journal article" date="2016" name="Plant J.">
        <title>Identification and characterization of the missing phosphatase on the riboflavin biosynthesis pathway in Arabidopsis thaliana.</title>
        <authorList>
            <person name="Sa N."/>
            <person name="Rawat R."/>
            <person name="Thornburg C."/>
            <person name="Walker K.D."/>
            <person name="Roje S."/>
        </authorList>
    </citation>
    <scope>FUNCTION</scope>
    <scope>CATALYTIC ACTIVITY</scope>
    <scope>SUBCELLULAR LOCATION</scope>
    <scope>SUBUNIT</scope>
    <scope>BIOPHYSICOCHEMICAL PROPERTIES</scope>
    <scope>SUBSTRATE SPECIFICITY</scope>
</reference>
<gene>
    <name evidence="3" type="primary">PYRP2</name>
    <name evidence="6" type="ordered locus">At4g11570</name>
    <name evidence="7" type="ORF">F25E4.190</name>
</gene>
<dbReference type="EC" id="3.1.3.104" evidence="2"/>
<dbReference type="EMBL" id="AL050399">
    <property type="protein sequence ID" value="CAB82162.1"/>
    <property type="molecule type" value="Genomic_DNA"/>
</dbReference>
<dbReference type="EMBL" id="AL161532">
    <property type="protein sequence ID" value="CAB78200.1"/>
    <property type="molecule type" value="Genomic_DNA"/>
</dbReference>
<dbReference type="EMBL" id="CP002687">
    <property type="protein sequence ID" value="AEE83025.1"/>
    <property type="molecule type" value="Genomic_DNA"/>
</dbReference>
<dbReference type="EMBL" id="CP002687">
    <property type="protein sequence ID" value="AEE83026.1"/>
    <property type="molecule type" value="Genomic_DNA"/>
</dbReference>
<dbReference type="EMBL" id="AY058171">
    <property type="protein sequence ID" value="AAL25585.1"/>
    <property type="molecule type" value="mRNA"/>
</dbReference>
<dbReference type="EMBL" id="AY098974">
    <property type="protein sequence ID" value="AAM19984.1"/>
    <property type="molecule type" value="mRNA"/>
</dbReference>
<dbReference type="EMBL" id="BT000932">
    <property type="protein sequence ID" value="AAN41332.1"/>
    <property type="molecule type" value="mRNA"/>
</dbReference>
<dbReference type="PIR" id="T10577">
    <property type="entry name" value="T10577"/>
</dbReference>
<dbReference type="RefSeq" id="NP_192894.1">
    <property type="nucleotide sequence ID" value="NM_117226.3"/>
</dbReference>
<dbReference type="RefSeq" id="NP_849359.1">
    <property type="nucleotide sequence ID" value="NM_179028.2"/>
</dbReference>
<dbReference type="SMR" id="Q9LDD5"/>
<dbReference type="FunCoup" id="Q9LDD5">
    <property type="interactions" value="401"/>
</dbReference>
<dbReference type="STRING" id="3702.Q9LDD5"/>
<dbReference type="PaxDb" id="3702-AT4G11570.2"/>
<dbReference type="ProteomicsDB" id="236603"/>
<dbReference type="EnsemblPlants" id="AT4G11570.1">
    <property type="protein sequence ID" value="AT4G11570.1"/>
    <property type="gene ID" value="AT4G11570"/>
</dbReference>
<dbReference type="EnsemblPlants" id="AT4G11570.2">
    <property type="protein sequence ID" value="AT4G11570.2"/>
    <property type="gene ID" value="AT4G11570"/>
</dbReference>
<dbReference type="GeneID" id="826761"/>
<dbReference type="Gramene" id="AT4G11570.1">
    <property type="protein sequence ID" value="AT4G11570.1"/>
    <property type="gene ID" value="AT4G11570"/>
</dbReference>
<dbReference type="Gramene" id="AT4G11570.2">
    <property type="protein sequence ID" value="AT4G11570.2"/>
    <property type="gene ID" value="AT4G11570"/>
</dbReference>
<dbReference type="KEGG" id="ath:AT4G11570"/>
<dbReference type="Araport" id="AT4G11570"/>
<dbReference type="TAIR" id="AT4G11570">
    <property type="gene designation" value="ATPYRP2"/>
</dbReference>
<dbReference type="eggNOG" id="KOG2914">
    <property type="taxonomic scope" value="Eukaryota"/>
</dbReference>
<dbReference type="HOGENOM" id="CLU_055359_1_0_1"/>
<dbReference type="InParanoid" id="Q9LDD5"/>
<dbReference type="OMA" id="QFIPERC"/>
<dbReference type="PhylomeDB" id="Q9LDD5"/>
<dbReference type="BRENDA" id="3.1.3.104">
    <property type="organism ID" value="399"/>
</dbReference>
<dbReference type="PRO" id="PR:Q9LDD5"/>
<dbReference type="Proteomes" id="UP000006548">
    <property type="component" value="Chromosome 4"/>
</dbReference>
<dbReference type="ExpressionAtlas" id="Q9LDD5">
    <property type="expression patterns" value="baseline and differential"/>
</dbReference>
<dbReference type="GO" id="GO:0009507">
    <property type="term" value="C:chloroplast"/>
    <property type="evidence" value="ECO:0007669"/>
    <property type="project" value="UniProtKB-SubCell"/>
</dbReference>
<dbReference type="GO" id="GO:0043726">
    <property type="term" value="F:5-amino-6-(5-phosphoribitylamino)uracil phosphatase activity"/>
    <property type="evidence" value="ECO:0007669"/>
    <property type="project" value="UniProtKB-EC"/>
</dbReference>
<dbReference type="GO" id="GO:0006468">
    <property type="term" value="P:protein phosphorylation"/>
    <property type="evidence" value="ECO:0000314"/>
    <property type="project" value="TAIR"/>
</dbReference>
<dbReference type="GO" id="GO:0009231">
    <property type="term" value="P:riboflavin biosynthetic process"/>
    <property type="evidence" value="ECO:0000315"/>
    <property type="project" value="TAIR"/>
</dbReference>
<dbReference type="CDD" id="cd07505">
    <property type="entry name" value="HAD_BPGM-like"/>
    <property type="match status" value="1"/>
</dbReference>
<dbReference type="Gene3D" id="3.40.50.1000">
    <property type="entry name" value="HAD superfamily/HAD-like"/>
    <property type="match status" value="1"/>
</dbReference>
<dbReference type="Gene3D" id="1.10.150.240">
    <property type="entry name" value="Putative phosphatase, domain 2"/>
    <property type="match status" value="1"/>
</dbReference>
<dbReference type="InterPro" id="IPR036412">
    <property type="entry name" value="HAD-like_sf"/>
</dbReference>
<dbReference type="InterPro" id="IPR006439">
    <property type="entry name" value="HAD-SF_hydro_IA"/>
</dbReference>
<dbReference type="InterPro" id="IPR041492">
    <property type="entry name" value="HAD_2"/>
</dbReference>
<dbReference type="InterPro" id="IPR023214">
    <property type="entry name" value="HAD_sf"/>
</dbReference>
<dbReference type="InterPro" id="IPR023198">
    <property type="entry name" value="PGP-like_dom2"/>
</dbReference>
<dbReference type="NCBIfam" id="TIGR01509">
    <property type="entry name" value="HAD-SF-IA-v3"/>
    <property type="match status" value="1"/>
</dbReference>
<dbReference type="PANTHER" id="PTHR47108">
    <property type="entry name" value="5-AMINO-6-(5-PHOSPHO-D-RIBITYLAMINO)URACIL PHOSPHATASE, CHLOROPLASTIC"/>
    <property type="match status" value="1"/>
</dbReference>
<dbReference type="PANTHER" id="PTHR47108:SF1">
    <property type="entry name" value="5-AMINO-6-(5-PHOSPHO-D-RIBITYLAMINO)URACIL PHOSPHATASE, CHLOROPLASTIC"/>
    <property type="match status" value="1"/>
</dbReference>
<dbReference type="Pfam" id="PF13419">
    <property type="entry name" value="HAD_2"/>
    <property type="match status" value="1"/>
</dbReference>
<dbReference type="SUPFAM" id="SSF56784">
    <property type="entry name" value="HAD-like"/>
    <property type="match status" value="1"/>
</dbReference>
<name>PYRP2_ARATH</name>
<feature type="transit peptide" description="Chloroplast" evidence="1">
    <location>
        <begin position="1"/>
        <end status="unknown"/>
    </location>
</feature>
<feature type="chain" id="PRO_0000439663" description="5-amino-6-(5-phospho-D-ribitylamino)uracil phosphatase, chloroplastic">
    <location>
        <begin status="unknown"/>
        <end position="373"/>
    </location>
</feature>
<comment type="function">
    <text evidence="2">Catalyzes the dephosphorylation of 5-amino-6-(5-phospho-D-ribitylamino)uracil, also known as ARPP, but has no activity toward flavin mononucleotide (FMN) (PubMed:27490826).</text>
</comment>
<comment type="catalytic activity">
    <reaction evidence="2">
        <text>5-amino-6-(5-phospho-D-ribitylamino)uracil + H2O = 5-amino-6-(D-ribitylamino)uracil + phosphate</text>
        <dbReference type="Rhea" id="RHEA:25197"/>
        <dbReference type="ChEBI" id="CHEBI:15377"/>
        <dbReference type="ChEBI" id="CHEBI:15934"/>
        <dbReference type="ChEBI" id="CHEBI:43474"/>
        <dbReference type="ChEBI" id="CHEBI:58421"/>
        <dbReference type="EC" id="3.1.3.104"/>
    </reaction>
</comment>
<comment type="cofactor">
    <cofactor evidence="5">
        <name>Mg(2+)</name>
        <dbReference type="ChEBI" id="CHEBI:18420"/>
    </cofactor>
</comment>
<comment type="biophysicochemical properties">
    <kinetics>
        <KM evidence="2">127 uM for 5-amino-6-(5-phospho-D-ribitylamino)uracil</KM>
        <Vmax evidence="2">0.21 umol/min/mg enzyme</Vmax>
        <text evidence="2">kcat is 0.13 sec(-1) for 5-amino-6-(5-phospho-D-ribitylamino)uracil.</text>
    </kinetics>
    <phDependence>
        <text evidence="2">Optimum pH is 6-8.</text>
    </phDependence>
    <temperatureDependence>
        <text evidence="2">Optimum temperature is 40-50 degrees Celsius.</text>
    </temperatureDependence>
</comment>
<comment type="subunit">
    <text evidence="2">Homodimer.</text>
</comment>
<comment type="subcellular location">
    <subcellularLocation>
        <location evidence="2">Plastid</location>
        <location evidence="2">Chloroplast</location>
    </subcellularLocation>
</comment>
<comment type="similarity">
    <text evidence="4">Belongs to the HAD-like hydrolase superfamily. DOG/GPP family.</text>
</comment>
<sequence length="373" mass="42204">MAEAIGAVSLVGHRPSIVRITVKNELKTQKSQSIVRFPVKVDYSAKGVLSHLMTQSVKKNRMSVFPIRALAMELTKEKKKDDRLPKTWNYLDSGADDKPSLWPPENKADKPSLHNPLLRQERMGCGWLGAIFEWEGVLIEDNPDLDNQSWLTLAQEEGKSPPPAFMLRRVEGMKNEQAISEVLCWSRDPVQVRRMAKRKEEIFKALHGGVYRLRDGSQEFVNVLMNNKIPMALVSTRPRETLENAVGSIGIRKFFSVIVASEDVYRGKPDPEMFIYAAQLLDFIPERCIVFGNSNQTIEAAHDGRMKCVAVASKHPIYELGAAELVVRRLDELSIIDLKKLADTDLTEFEPELEMEKEDERELPSSAVAVDDF</sequence>
<evidence type="ECO:0000255" key="1"/>
<evidence type="ECO:0000269" key="2">
    <source>
    </source>
</evidence>
<evidence type="ECO:0000303" key="3">
    <source>
    </source>
</evidence>
<evidence type="ECO:0000305" key="4"/>
<evidence type="ECO:0000305" key="5">
    <source>
    </source>
</evidence>
<evidence type="ECO:0000312" key="6">
    <source>
        <dbReference type="Araport" id="AT4G11570"/>
    </source>
</evidence>
<evidence type="ECO:0000312" key="7">
    <source>
        <dbReference type="EMBL" id="AAL25585.1"/>
    </source>
</evidence>
<accession>Q9LDD5</accession>
<protein>
    <recommendedName>
        <fullName evidence="3">5-amino-6-(5-phospho-D-ribitylamino)uracil phosphatase, chloroplastic</fullName>
        <shortName evidence="3">AtPyrP2</shortName>
        <ecNumber evidence="2">3.1.3.104</ecNumber>
    </recommendedName>
    <alternativeName>
        <fullName evidence="5">5-amino-6-ribitylamino-2,4(1H,3H)-pyrimidinedione 5'-phosphate phosphatase</fullName>
        <shortName evidence="5">ARPP phosphatase</shortName>
    </alternativeName>
    <alternativeName>
        <fullName evidence="4">Haloacid dehalogenase-like hydrolase domain-containing protein</fullName>
    </alternativeName>
</protein>
<proteinExistence type="evidence at protein level"/>
<keyword id="KW-0150">Chloroplast</keyword>
<keyword id="KW-0378">Hydrolase</keyword>
<keyword id="KW-0934">Plastid</keyword>
<keyword id="KW-1185">Reference proteome</keyword>
<keyword id="KW-0686">Riboflavin biosynthesis</keyword>
<keyword id="KW-0809">Transit peptide</keyword>